<comment type="function">
    <text evidence="2 13 19 20">Plays a role in the inducible expression of cytokine genes in T-cells, especially in the induction of the IL-2 or IL-4 gene transcription (PubMed:9388475). Also controls gene expression in embryonic cardiac cells. Could regulate not only the activation and proliferation but also the differentiation and programmed death of T-lymphocytes as well as lymphoid and non-lymphoid cells (By similarity). Required for osteoclastogenesis and regulates many genes important for osteoclast differentiation and function (PubMed:23990468, PubMed:26644563).</text>
</comment>
<comment type="subunit">
    <text evidence="1 2 13">Member of the multicomponent NFATC transcription complex that consists of at least two components, a pre-existing cytoplasmic component NFATC2 and an inducible nuclear component NFATC1. Other members such as NFATC4, NFATC3 or members of the activating protein-1 family, MAF, GATA4 and Cbp/p300 can also bind the complex. NFATC proteins bind to DNA as monomers (By similarity). Interacts with HOMER2 and HOMER3; this interaction may compete with calcineurin/PPP3CA-binding and hence prevent NFATC1 dephosphorylation and activation (By similarity). Interacts with TLE6/GRG6 (PubMed:23990468).</text>
</comment>
<comment type="interaction">
    <interactant intactId="EBI-8073353">
        <id>O88942</id>
    </interactant>
    <interactant intactId="EBI-10053030">
        <id>PRO_0000278754</id>
        <dbReference type="UniProtKB" id="Q913V3"/>
    </interactant>
    <organismsDiffer>true</organismsDiffer>
    <experiments>2</experiments>
</comment>
<comment type="subcellular location">
    <subcellularLocation>
        <location evidence="9 15 17 18">Cytoplasm</location>
    </subcellularLocation>
    <subcellularLocation>
        <location evidence="9 11 13 14 16 17 18">Nucleus</location>
    </subcellularLocation>
    <text evidence="2 11 14 16">Cytoplasmic for the phosphorylated form and nuclear after activation that is controlled by calcineurin-mediated dephosphorylation. Rapid nuclear exit of NFATC is thought to be one mechanism by which cells distinguish between sustained and transient calcium signals. Translocation to the nucleus is increased in the presence of calcium in pre-osteoblasts (PubMed:21514407). The subcellular localization of NFATC plays a key role in the regulation of gene transcription (By similarity). Nuclear translocation of NFATC1 is enhanced in the presence of TNFSF11 (PubMed:26644563). Nuclear translocation is decreased in the presence of FBN1 which can bind and sequester TNFSF11 (PubMed:24039232).</text>
</comment>
<comment type="alternative products">
    <event type="alternative splicing"/>
    <event type="alternative initiation"/>
    <isoform>
        <id>O88942-1</id>
        <name>Alpha</name>
        <sequence type="displayed"/>
    </isoform>
    <isoform>
        <id>O88942-2</id>
        <name>Beta</name>
        <sequence type="described" ref="VSP_005594"/>
    </isoform>
    <isoform>
        <id>O88942-3</id>
        <name>Alpha'</name>
        <sequence type="described" ref="VSP_018867"/>
    </isoform>
</comment>
<comment type="tissue specificity">
    <text evidence="5 8 9 10 12 13 19">Expressed in the submandibular gland (at protein level) (PubMed:21435446). Expressed in basal epidermal cells (at protein level) (PubMed:19626032). Expressed in spleen, skeletal muscle and skin (PubMed:9388475). Express in the lung and thymus (PubMed:17579027, PubMed:9388475). Weakly expressed in heart, brain, liver and kidney. Not expressed in testis (PubMed:10072529). Expressed in osteoclasts (PubMed:23990468). Also expressed during TNFSF11/RANKL-induced differentiation of bone marrow-derived macrophages to osteoclasts (PubMed:23478294).</text>
</comment>
<comment type="developmental stage">
    <text evidence="7 19">Expressed at low levels at 7 dpc and increases until 17 dpc. At 17 dpc, strongly expressed in thymus, lung and submandibular gland and weakly in skeletal muscle and heart (PubMed:9388475). Expressed in the developing heart at 13.5 and 16.5 dpc, during the transition from spongy to compact myocardium (PubMed:17198697).</text>
</comment>
<comment type="induction">
    <text evidence="5 6 11 12 13 16 19">Induced in T-lymphocytes upon activation of the T-cell receptor (TCR) complex. Induced after addition of phorbol 12-myristate 13-acetate (PMA) (PubMed:10072529, PubMed:9388475). Induced by calcium in pre-osteoblasts and osteoblasts (PubMed:21514407). Expressed during osteoclastogenesis, its induction and activation is regulated by TNFSF11/RANKL.</text>
</comment>
<comment type="domain">
    <text evidence="1">Rel Similarity Domain (RSD) allows DNA-binding and cooperative interactions with AP1 factors.</text>
</comment>
<comment type="domain">
    <text evidence="1">The N-terminal transactivation domain (TAD-A) binds to and is activated by Cbp/p300. The dephosphorylated form contains two unmasked nuclear localization signals (NLS), which allow translocation of the protein to the nucleus (By similarity).</text>
</comment>
<comment type="PTM">
    <text evidence="1">Phosphorylated by NFATC-kinase and GSK3B; phosphorylation induces NFATC1 nuclear exit and dephosphorylation by calcineurin promotes nuclear import. Phosphorylation by PKA and DYRK2 negatively modulates nuclear accumulation, and promotes subsequent phosphorylation by GSK3B or casein kinase 1 (By similarity).</text>
</comment>
<comment type="miscellaneous">
    <molecule>Isoform Alpha'</molecule>
    <text evidence="22">Produced by alternative initiation at Met-37 of isoform Alpha.</text>
</comment>
<sequence>MPNTSFPVPSKFPLGPPAAVCGSGETLRPAPPSGGTMKAAEEEHYSYVSPSVTSTLPLPTAHSALPAACHDLQTSTPGISAVPSANHPPSYGGAVDSGPSGYFLSSGNTRPNGAPTLESPRIEITSYLGLHHGSGQFFHDVEVEDVLPSCKRSPSTATLHLPSLEAYRDPSCLSPASSLSSRSCNSEASSYESNYSYPYASPQTSPWQSPCVSPKTTDPEEGFPRSLGACHLLGSPRHSPSTSPRASITEESWLGARGSRPTSPCNKRKYSLNGRQPSCSPHHSPTPSPHGSPRVSVTEDTWLGNTTQYTSSAIVAAINALTTDSTLDLGDGVPIKSRKTALEHAPSVALKVEPAGEDLGTTPPTSDFPPEEYTFQHLRKGAFCEQYLSVPQASYQWAKPKSLSPTSYMSPSLPALDWQLPSHSGPYELRIEVQPKSHHRAHYETEGSRGAVKASAGGHPIVQLHGYLENEPLTLQLFIGTADDRLLRPHAFYQVHRITGKTVSTTSHEIILSNTKVLEIPLLPENNMRAIIDCAGILKLRNSDIELRKGETDIGRKNTRVRLVFRVHIPQPNGRTLSLQVASNPIECSQRSAQELPLVEKQSTDSYPVIGGKKMVLSGHNFLQDSKVIFVEKAPDGHHVWEMEAKTDRDLCKPNSLVVEIPPFRNQRITSPAQVSFYVCNGKRKRSQYQRFTYLPANGNSVFLTLSSESELRGGFY</sequence>
<name>NFAC1_MOUSE</name>
<feature type="chain" id="PRO_0000030331" description="Nuclear factor of activated T-cells, cytoplasmic 1">
    <location>
        <begin position="1"/>
        <end position="717"/>
    </location>
</feature>
<feature type="repeat" description="1">
    <location>
        <begin position="205"/>
        <end position="221"/>
    </location>
</feature>
<feature type="repeat" description="2">
    <location>
        <begin position="235"/>
        <end position="251"/>
    </location>
</feature>
<feature type="repeat" description="3">
    <location>
        <begin position="284"/>
        <end position="300"/>
    </location>
</feature>
<feature type="domain" description="RHD" evidence="3">
    <location>
        <begin position="411"/>
        <end position="593"/>
    </location>
</feature>
<feature type="DNA-binding region" evidence="2">
    <location>
        <begin position="440"/>
        <end position="447"/>
    </location>
</feature>
<feature type="region of interest" description="Disordered" evidence="4">
    <location>
        <begin position="1"/>
        <end position="38"/>
    </location>
</feature>
<feature type="region of interest" description="Calcineurin-binding">
    <location>
        <begin position="120"/>
        <end position="125"/>
    </location>
</feature>
<feature type="region of interest" description="Transactivation domain A (TAD-A)">
    <location>
        <begin position="128"/>
        <end position="220"/>
    </location>
</feature>
<feature type="region of interest" description="Disordered" evidence="4">
    <location>
        <begin position="202"/>
        <end position="298"/>
    </location>
</feature>
<feature type="region of interest" description="3 X SP repeats">
    <location>
        <begin position="205"/>
        <end position="300"/>
    </location>
</feature>
<feature type="short sequence motif" description="Nuclear localization signal">
    <location>
        <begin position="267"/>
        <end position="269"/>
    </location>
</feature>
<feature type="short sequence motif" description="Nuclear export signal">
    <location>
        <begin position="312"/>
        <end position="323"/>
    </location>
</feature>
<feature type="short sequence motif" description="Nuclear localization signal">
    <location>
        <begin position="683"/>
        <end position="685"/>
    </location>
</feature>
<feature type="compositionally biased region" description="Polar residues" evidence="4">
    <location>
        <begin position="203"/>
        <end position="216"/>
    </location>
</feature>
<feature type="compositionally biased region" description="Polar residues" evidence="4">
    <location>
        <begin position="238"/>
        <end position="250"/>
    </location>
</feature>
<feature type="modified residue" description="Phosphoserine" evidence="23">
    <location>
        <position position="235"/>
    </location>
</feature>
<feature type="modified residue" description="Phosphoserine" evidence="23">
    <location>
        <position position="239"/>
    </location>
</feature>
<feature type="modified residue" description="Phosphoserine; by PKA" evidence="2">
    <location>
        <position position="247"/>
    </location>
</feature>
<feature type="modified residue" description="Phosphoserine; by PKA" evidence="2">
    <location>
        <position position="271"/>
    </location>
</feature>
<feature type="modified residue" description="Phosphoserine; by PKA" evidence="2">
    <location>
        <position position="296"/>
    </location>
</feature>
<feature type="splice variant" id="VSP_005594" description="In isoform Beta." evidence="21">
    <original>MPNTSFPVPSKFPLGPPAAVCGSGETLRPAPPSGGTMKAAEE</original>
    <variation>MTGLEQDPEFDFDFLFEFDQSGGGAAAA</variation>
    <location>
        <begin position="1"/>
        <end position="42"/>
    </location>
</feature>
<feature type="splice variant" id="VSP_018867" description="In isoform Alpha'." evidence="22">
    <location>
        <begin position="1"/>
        <end position="36"/>
    </location>
</feature>
<dbReference type="EMBL" id="AF049606">
    <property type="protein sequence ID" value="AAC05505.1"/>
    <property type="molecule type" value="mRNA"/>
</dbReference>
<dbReference type="EMBL" id="AF087434">
    <property type="protein sequence ID" value="AAC36725.1"/>
    <property type="molecule type" value="mRNA"/>
</dbReference>
<dbReference type="CCDS" id="CCDS29369.1">
    <molecule id="O88942-2"/>
</dbReference>
<dbReference type="CCDS" id="CCDS89287.1">
    <molecule id="O88942-1"/>
</dbReference>
<dbReference type="SMR" id="O88942"/>
<dbReference type="FunCoup" id="O88942">
    <property type="interactions" value="931"/>
</dbReference>
<dbReference type="IntAct" id="O88942">
    <property type="interactions" value="2"/>
</dbReference>
<dbReference type="MINT" id="O88942"/>
<dbReference type="STRING" id="10090.ENSMUSP00000129001"/>
<dbReference type="ChEMBL" id="CHEMBL6034"/>
<dbReference type="GlyGen" id="O88942">
    <property type="glycosylation" value="1 site, 1 O-linked glycan (1 site)"/>
</dbReference>
<dbReference type="iPTMnet" id="O88942"/>
<dbReference type="PhosphoSitePlus" id="O88942"/>
<dbReference type="jPOST" id="O88942"/>
<dbReference type="PaxDb" id="10090-ENSMUSP00000129001"/>
<dbReference type="ProteomicsDB" id="287397">
    <molecule id="O88942-1"/>
</dbReference>
<dbReference type="ProteomicsDB" id="287398">
    <molecule id="O88942-2"/>
</dbReference>
<dbReference type="ProteomicsDB" id="287399">
    <molecule id="O88942-3"/>
</dbReference>
<dbReference type="AGR" id="MGI:102469"/>
<dbReference type="MGI" id="MGI:102469">
    <property type="gene designation" value="Nfatc1"/>
</dbReference>
<dbReference type="eggNOG" id="ENOG502QTX8">
    <property type="taxonomic scope" value="Eukaryota"/>
</dbReference>
<dbReference type="InParanoid" id="O88942"/>
<dbReference type="PhylomeDB" id="O88942"/>
<dbReference type="Reactome" id="R-MMU-2025928">
    <property type="pathway name" value="Calcineurin activates NFAT"/>
</dbReference>
<dbReference type="Reactome" id="R-MMU-2871809">
    <property type="pathway name" value="FCERI mediated Ca+2 mobilization"/>
</dbReference>
<dbReference type="Reactome" id="R-MMU-4086398">
    <property type="pathway name" value="Ca2+ pathway"/>
</dbReference>
<dbReference type="Reactome" id="R-MMU-5607763">
    <property type="pathway name" value="CLEC7A (Dectin-1) induces NFAT activation"/>
</dbReference>
<dbReference type="ChiTaRS" id="Nfatc1">
    <property type="organism name" value="mouse"/>
</dbReference>
<dbReference type="PRO" id="PR:O88942"/>
<dbReference type="Proteomes" id="UP000000589">
    <property type="component" value="Unplaced"/>
</dbReference>
<dbReference type="RNAct" id="O88942">
    <property type="molecule type" value="protein"/>
</dbReference>
<dbReference type="GO" id="GO:0005737">
    <property type="term" value="C:cytoplasm"/>
    <property type="evidence" value="ECO:0000314"/>
    <property type="project" value="UniProtKB"/>
</dbReference>
<dbReference type="GO" id="GO:0005634">
    <property type="term" value="C:nucleus"/>
    <property type="evidence" value="ECO:0000314"/>
    <property type="project" value="UniProtKB"/>
</dbReference>
<dbReference type="GO" id="GO:0005667">
    <property type="term" value="C:transcription regulator complex"/>
    <property type="evidence" value="ECO:0000353"/>
    <property type="project" value="MGI"/>
</dbReference>
<dbReference type="GO" id="GO:0003682">
    <property type="term" value="F:chromatin binding"/>
    <property type="evidence" value="ECO:0000314"/>
    <property type="project" value="MGI"/>
</dbReference>
<dbReference type="GO" id="GO:0003677">
    <property type="term" value="F:DNA binding"/>
    <property type="evidence" value="ECO:0000314"/>
    <property type="project" value="MGI"/>
</dbReference>
<dbReference type="GO" id="GO:0001228">
    <property type="term" value="F:DNA-binding transcription activator activity, RNA polymerase II-specific"/>
    <property type="evidence" value="ECO:0000314"/>
    <property type="project" value="BHF-UCL"/>
</dbReference>
<dbReference type="GO" id="GO:0000981">
    <property type="term" value="F:DNA-binding transcription factor activity, RNA polymerase II-specific"/>
    <property type="evidence" value="ECO:0000314"/>
    <property type="project" value="BHF-UCL"/>
</dbReference>
<dbReference type="GO" id="GO:0140297">
    <property type="term" value="F:DNA-binding transcription factor binding"/>
    <property type="evidence" value="ECO:0000353"/>
    <property type="project" value="UniProtKB"/>
</dbReference>
<dbReference type="GO" id="GO:0001227">
    <property type="term" value="F:DNA-binding transcription repressor activity, RNA polymerase II-specific"/>
    <property type="evidence" value="ECO:0000314"/>
    <property type="project" value="MGI"/>
</dbReference>
<dbReference type="GO" id="GO:0048273">
    <property type="term" value="F:mitogen-activated protein kinase p38 binding"/>
    <property type="evidence" value="ECO:0000353"/>
    <property type="project" value="BHF-UCL"/>
</dbReference>
<dbReference type="GO" id="GO:0000978">
    <property type="term" value="F:RNA polymerase II cis-regulatory region sequence-specific DNA binding"/>
    <property type="evidence" value="ECO:0000314"/>
    <property type="project" value="BHF-UCL"/>
</dbReference>
<dbReference type="GO" id="GO:0061629">
    <property type="term" value="F:RNA polymerase II-specific DNA-binding transcription factor binding"/>
    <property type="evidence" value="ECO:0000353"/>
    <property type="project" value="BHF-UCL"/>
</dbReference>
<dbReference type="GO" id="GO:0043565">
    <property type="term" value="F:sequence-specific DNA binding"/>
    <property type="evidence" value="ECO:0000314"/>
    <property type="project" value="MGI"/>
</dbReference>
<dbReference type="GO" id="GO:0003176">
    <property type="term" value="P:aortic valve development"/>
    <property type="evidence" value="ECO:0000315"/>
    <property type="project" value="BHF-UCL"/>
</dbReference>
<dbReference type="GO" id="GO:0003180">
    <property type="term" value="P:aortic valve morphogenesis"/>
    <property type="evidence" value="ECO:0000315"/>
    <property type="project" value="MGI"/>
</dbReference>
<dbReference type="GO" id="GO:0002337">
    <property type="term" value="P:B-1a B cell differentiation"/>
    <property type="evidence" value="ECO:0000315"/>
    <property type="project" value="MGI"/>
</dbReference>
<dbReference type="GO" id="GO:0060854">
    <property type="term" value="P:branching involved in lymph vessel morphogenesis"/>
    <property type="evidence" value="ECO:0000315"/>
    <property type="project" value="MGI"/>
</dbReference>
<dbReference type="GO" id="GO:0033173">
    <property type="term" value="P:calcineurin-NFAT signaling cascade"/>
    <property type="evidence" value="ECO:0000315"/>
    <property type="project" value="MGI"/>
</dbReference>
<dbReference type="GO" id="GO:0006816">
    <property type="term" value="P:calcium ion transport"/>
    <property type="evidence" value="ECO:0000315"/>
    <property type="project" value="MGI"/>
</dbReference>
<dbReference type="GO" id="GO:0071277">
    <property type="term" value="P:cellular response to calcium ion"/>
    <property type="evidence" value="ECO:0000314"/>
    <property type="project" value="MGI"/>
</dbReference>
<dbReference type="GO" id="GO:0003197">
    <property type="term" value="P:endocardial cushion development"/>
    <property type="evidence" value="ECO:0000316"/>
    <property type="project" value="BHF-UCL"/>
</dbReference>
<dbReference type="GO" id="GO:0001837">
    <property type="term" value="P:epithelial to mesenchymal transition"/>
    <property type="evidence" value="ECO:0000315"/>
    <property type="project" value="MGI"/>
</dbReference>
<dbReference type="GO" id="GO:0000082">
    <property type="term" value="P:G1/S transition of mitotic cell cycle"/>
    <property type="evidence" value="ECO:0000315"/>
    <property type="project" value="MGI"/>
</dbReference>
<dbReference type="GO" id="GO:0010467">
    <property type="term" value="P:gene expression"/>
    <property type="evidence" value="ECO:0000315"/>
    <property type="project" value="MGI"/>
</dbReference>
<dbReference type="GO" id="GO:0007507">
    <property type="term" value="P:heart development"/>
    <property type="evidence" value="ECO:0000315"/>
    <property type="project" value="MGI"/>
</dbReference>
<dbReference type="GO" id="GO:0061384">
    <property type="term" value="P:heart trabecula morphogenesis"/>
    <property type="evidence" value="ECO:0000315"/>
    <property type="project" value="MGI"/>
</dbReference>
<dbReference type="GO" id="GO:0003170">
    <property type="term" value="P:heart valve development"/>
    <property type="evidence" value="ECO:0000315"/>
    <property type="project" value="BHF-UCL"/>
</dbReference>
<dbReference type="GO" id="GO:0003179">
    <property type="term" value="P:heart valve morphogenesis"/>
    <property type="evidence" value="ECO:0000315"/>
    <property type="project" value="MGI"/>
</dbReference>
<dbReference type="GO" id="GO:0035556">
    <property type="term" value="P:intracellular signal transduction"/>
    <property type="evidence" value="ECO:0000266"/>
    <property type="project" value="MGI"/>
</dbReference>
<dbReference type="GO" id="GO:0043616">
    <property type="term" value="P:keratinocyte proliferation"/>
    <property type="evidence" value="ECO:0000315"/>
    <property type="project" value="MGI"/>
</dbReference>
<dbReference type="GO" id="GO:0001946">
    <property type="term" value="P:lymphangiogenesis"/>
    <property type="evidence" value="ECO:0000316"/>
    <property type="project" value="MGI"/>
</dbReference>
<dbReference type="GO" id="GO:0010839">
    <property type="term" value="P:negative regulation of keratinocyte proliferation"/>
    <property type="evidence" value="ECO:0000315"/>
    <property type="project" value="MGI"/>
</dbReference>
<dbReference type="GO" id="GO:0045668">
    <property type="term" value="P:negative regulation of osteoblast differentiation"/>
    <property type="evidence" value="ECO:0000314"/>
    <property type="project" value="MGI"/>
</dbReference>
<dbReference type="GO" id="GO:2000647">
    <property type="term" value="P:negative regulation of stem cell proliferation"/>
    <property type="evidence" value="ECO:0000315"/>
    <property type="project" value="MGI"/>
</dbReference>
<dbReference type="GO" id="GO:0000122">
    <property type="term" value="P:negative regulation of transcription by RNA polymerase II"/>
    <property type="evidence" value="ECO:0000314"/>
    <property type="project" value="MGI"/>
</dbReference>
<dbReference type="GO" id="GO:0030316">
    <property type="term" value="P:osteoclast differentiation"/>
    <property type="evidence" value="ECO:0000316"/>
    <property type="project" value="MGI"/>
</dbReference>
<dbReference type="GO" id="GO:0045893">
    <property type="term" value="P:positive regulation of DNA-templated transcription"/>
    <property type="evidence" value="ECO:0000266"/>
    <property type="project" value="MGI"/>
</dbReference>
<dbReference type="GO" id="GO:0010628">
    <property type="term" value="P:positive regulation of gene expression"/>
    <property type="evidence" value="ECO:0000314"/>
    <property type="project" value="MGI"/>
</dbReference>
<dbReference type="GO" id="GO:0045944">
    <property type="term" value="P:positive regulation of transcription by RNA polymerase II"/>
    <property type="evidence" value="ECO:0000314"/>
    <property type="project" value="BHF-UCL"/>
</dbReference>
<dbReference type="GO" id="GO:0003177">
    <property type="term" value="P:pulmonary valve development"/>
    <property type="evidence" value="ECO:0000315"/>
    <property type="project" value="BHF-UCL"/>
</dbReference>
<dbReference type="GO" id="GO:0003184">
    <property type="term" value="P:pulmonary valve morphogenesis"/>
    <property type="evidence" value="ECO:0000315"/>
    <property type="project" value="MGI"/>
</dbReference>
<dbReference type="GO" id="GO:0042634">
    <property type="term" value="P:regulation of hair cycle"/>
    <property type="evidence" value="ECO:0000315"/>
    <property type="project" value="MGI"/>
</dbReference>
<dbReference type="GO" id="GO:0006357">
    <property type="term" value="P:regulation of transcription by RNA polymerase II"/>
    <property type="evidence" value="ECO:0000315"/>
    <property type="project" value="BHF-UCL"/>
</dbReference>
<dbReference type="GO" id="GO:1905314">
    <property type="term" value="P:semi-lunar valve development"/>
    <property type="evidence" value="ECO:0000315"/>
    <property type="project" value="BHF-UCL"/>
</dbReference>
<dbReference type="GO" id="GO:0072089">
    <property type="term" value="P:stem cell proliferation"/>
    <property type="evidence" value="ECO:0000315"/>
    <property type="project" value="MGI"/>
</dbReference>
<dbReference type="GO" id="GO:0006366">
    <property type="term" value="P:transcription by RNA polymerase II"/>
    <property type="evidence" value="ECO:0000314"/>
    <property type="project" value="MGI"/>
</dbReference>
<dbReference type="GO" id="GO:0014883">
    <property type="term" value="P:transition between fast and slow fiber"/>
    <property type="evidence" value="ECO:0000315"/>
    <property type="project" value="MGI"/>
</dbReference>
<dbReference type="GO" id="GO:0060412">
    <property type="term" value="P:ventricular septum morphogenesis"/>
    <property type="evidence" value="ECO:0000315"/>
    <property type="project" value="MGI"/>
</dbReference>
<dbReference type="CDD" id="cd07881">
    <property type="entry name" value="RHD-n_NFAT"/>
    <property type="match status" value="1"/>
</dbReference>
<dbReference type="FunFam" id="2.60.40.10:FF:000040">
    <property type="entry name" value="Nuclear factor of activated T-cells, cytoplasmic, calcineurin-dependent 2"/>
    <property type="match status" value="1"/>
</dbReference>
<dbReference type="FunFam" id="2.60.40.340:FF:000001">
    <property type="entry name" value="Nuclear factor of activated T-cells, cytoplasmic, calcineurin-dependent 2"/>
    <property type="match status" value="1"/>
</dbReference>
<dbReference type="Gene3D" id="2.60.40.10">
    <property type="entry name" value="Immunoglobulins"/>
    <property type="match status" value="1"/>
</dbReference>
<dbReference type="Gene3D" id="2.60.40.340">
    <property type="entry name" value="Rel homology domain (RHD), DNA-binding domain"/>
    <property type="match status" value="1"/>
</dbReference>
<dbReference type="InterPro" id="IPR013783">
    <property type="entry name" value="Ig-like_fold"/>
</dbReference>
<dbReference type="InterPro" id="IPR014756">
    <property type="entry name" value="Ig_E-set"/>
</dbReference>
<dbReference type="InterPro" id="IPR002909">
    <property type="entry name" value="IPT_dom"/>
</dbReference>
<dbReference type="InterPro" id="IPR008366">
    <property type="entry name" value="NFAT"/>
</dbReference>
<dbReference type="InterPro" id="IPR008967">
    <property type="entry name" value="p53-like_TF_DNA-bd_sf"/>
</dbReference>
<dbReference type="InterPro" id="IPR032397">
    <property type="entry name" value="RHD_dimer"/>
</dbReference>
<dbReference type="InterPro" id="IPR011539">
    <property type="entry name" value="RHD_DNA_bind_dom"/>
</dbReference>
<dbReference type="InterPro" id="IPR037059">
    <property type="entry name" value="RHD_DNA_bind_dom_sf"/>
</dbReference>
<dbReference type="PANTHER" id="PTHR12533">
    <property type="entry name" value="NFAT"/>
    <property type="match status" value="1"/>
</dbReference>
<dbReference type="PANTHER" id="PTHR12533:SF5">
    <property type="entry name" value="NUCLEAR FACTOR OF ACTIVATED T-CELLS, CYTOPLASMIC 1"/>
    <property type="match status" value="1"/>
</dbReference>
<dbReference type="Pfam" id="PF16179">
    <property type="entry name" value="RHD_dimer"/>
    <property type="match status" value="1"/>
</dbReference>
<dbReference type="Pfam" id="PF00554">
    <property type="entry name" value="RHD_DNA_bind"/>
    <property type="match status" value="1"/>
</dbReference>
<dbReference type="PRINTS" id="PR01789">
    <property type="entry name" value="NUCFACTORATC"/>
</dbReference>
<dbReference type="SMART" id="SM00429">
    <property type="entry name" value="IPT"/>
    <property type="match status" value="1"/>
</dbReference>
<dbReference type="SUPFAM" id="SSF81296">
    <property type="entry name" value="E set domains"/>
    <property type="match status" value="1"/>
</dbReference>
<dbReference type="SUPFAM" id="SSF49417">
    <property type="entry name" value="p53-like transcription factors"/>
    <property type="match status" value="1"/>
</dbReference>
<dbReference type="PROSITE" id="PS50254">
    <property type="entry name" value="REL_2"/>
    <property type="match status" value="1"/>
</dbReference>
<reference key="1">
    <citation type="journal article" date="1997" name="Biochem. Biophys. Res. Commun.">
        <title>Molecular cloning and functional characterization of murine cDNA encoding transcription factor NFATc.</title>
        <authorList>
            <person name="Pan S."/>
            <person name="Koyano-Nakagawa N."/>
            <person name="Tsuruta L."/>
            <person name="Amasaki Y."/>
            <person name="Yokota T."/>
            <person name="Mori S."/>
            <person name="Arai N."/>
            <person name="Arai K."/>
        </authorList>
    </citation>
    <scope>NUCLEOTIDE SEQUENCE [MRNA] (ISOFORM BETA)</scope>
    <scope>FUNCTION</scope>
    <scope>INDUCTION</scope>
    <scope>TISSUE SPECIFICITY</scope>
    <scope>DEVELOPMENTAL STAGE</scope>
</reference>
<reference key="2">
    <citation type="journal article" date="1999" name="J. Immunol.">
        <title>NF-ATc Isoforms are differentially expressed and regulated in murine T and mast cells.</title>
        <authorList>
            <person name="Sherman M.A."/>
            <person name="Powell D.R."/>
            <person name="Weiss D.L."/>
            <person name="Brown M.A."/>
        </authorList>
    </citation>
    <scope>NUCLEOTIDE SEQUENCE [MRNA] (ISOFORM ALPHA)</scope>
    <scope>INDUCTION</scope>
    <scope>TISSUE SPECIFICITY</scope>
    <source>
        <strain>BALB/cJ</strain>
        <tissue>Fetal liver</tissue>
        <tissue>Mast cell</tissue>
    </source>
</reference>
<reference key="3">
    <citation type="journal article" date="2007" name="Am. J. Physiol.">
        <title>Evidence that calcineurin is required for the genesis of bone-resorbing osteoclasts.</title>
        <authorList>
            <person name="Sun L."/>
            <person name="Peng Y."/>
            <person name="Zaidi N."/>
            <person name="Zhu L.L."/>
            <person name="Iqbal J."/>
            <person name="Yamoah K."/>
            <person name="Wang X."/>
            <person name="Liu P."/>
            <person name="Abe E."/>
            <person name="Moonga B.S."/>
            <person name="Epstein S."/>
            <person name="Zaidi M."/>
        </authorList>
    </citation>
    <scope>INDUCTION BY TNFSF11-INDUCED OSTEOCLASTOGENESIS</scope>
</reference>
<reference key="4">
    <citation type="journal article" date="2007" name="Dev. Biol.">
        <title>Dosage-dependent transcriptional regulation by the calcineurin/NFAT signaling in developing myocardium transition.</title>
        <authorList>
            <person name="Yang X.Y."/>
            <person name="Yang T.T.C."/>
            <person name="Schubert W."/>
            <person name="Factor S.M."/>
            <person name="Chow C.-W."/>
        </authorList>
    </citation>
    <scope>DEVELOPMENTAL STAGE</scope>
</reference>
<reference key="5">
    <citation type="journal article" date="2007" name="J. Immunol.">
        <title>Selective role of NFATc3 in positive selection of thymocytes.</title>
        <authorList>
            <person name="Cante-Barrett K."/>
            <person name="Winslow M.M."/>
            <person name="Crabtree G.R."/>
        </authorList>
    </citation>
    <scope>TISSUE SPECIFICITY</scope>
</reference>
<reference key="6">
    <citation type="journal article" date="2010" name="Cell">
        <title>A tissue-specific atlas of mouse protein phosphorylation and expression.</title>
        <authorList>
            <person name="Huttlin E.L."/>
            <person name="Jedrychowski M.P."/>
            <person name="Elias J.E."/>
            <person name="Goswami T."/>
            <person name="Rad R."/>
            <person name="Beausoleil S.A."/>
            <person name="Villen J."/>
            <person name="Haas W."/>
            <person name="Sowa M.E."/>
            <person name="Gygi S.P."/>
        </authorList>
    </citation>
    <scope>PHOSPHORYLATION [LARGE SCALE ANALYSIS] AT SER-235 AND SER-239</scope>
    <scope>IDENTIFICATION BY MASS SPECTROMETRY [LARGE SCALE ANALYSIS]</scope>
    <source>
        <tissue>Lung</tissue>
        <tissue>Spleen</tissue>
    </source>
</reference>
<reference key="7">
    <citation type="journal article" date="2010" name="J. Invest. Dermatol.">
        <title>Loss of calcineurin Aalpha alters keratinocyte survival and differentiation.</title>
        <authorList>
            <person name="Pena J.A."/>
            <person name="Losi-Sasaki J.L."/>
            <person name="Gooch J.L."/>
        </authorList>
    </citation>
    <scope>SUBCELLULAR LOCATION</scope>
    <scope>TISSUE SPECIFICITY</scope>
</reference>
<reference key="8">
    <citation type="journal article" date="2011" name="Am. J. Pathol.">
        <title>Rescue of calcineurin Aalpha(-/-) mice reveals a novel role for the alpha isoform in the salivary gland.</title>
        <authorList>
            <person name="Reddy R.N."/>
            <person name="Pena J.A."/>
            <person name="Roberts B.R."/>
            <person name="Williams S.R."/>
            <person name="Price S.R."/>
            <person name="Gooch J.L."/>
        </authorList>
    </citation>
    <scope>TISSUE SPECIFICITY</scope>
</reference>
<reference key="9">
    <citation type="journal article" date="2011" name="Bone">
        <title>High extracellular calcium-induced NFATc3 regulates the expression of receptor activator of NF-kappaB ligand in osteoblasts.</title>
        <authorList>
            <person name="Lee H.L."/>
            <person name="Bae O.Y."/>
            <person name="Baek K.H."/>
            <person name="Kwon A."/>
            <person name="Hwang H.R."/>
            <person name="Qadir A.S."/>
            <person name="Park H.J."/>
            <person name="Woo K.M."/>
            <person name="Ryoo H.M."/>
            <person name="Baek J.H."/>
        </authorList>
    </citation>
    <scope>SUBCELLULAR LOCATION</scope>
    <scope>INDUCTION BY CALCIUM</scope>
</reference>
<reference key="10">
    <citation type="journal article" date="2013" name="Cell Res.">
        <title>Early estrogen-induced gene 1, a novel RANK signaling component, is essential for osteoclastogenesis.</title>
        <authorList>
            <person name="Choi H.K."/>
            <person name="Kang H.R."/>
            <person name="Jung E."/>
            <person name="Kim T.E."/>
            <person name="Lin J.J."/>
            <person name="Lee S.Y."/>
        </authorList>
    </citation>
    <scope>TISSUE SPECIFICITY</scope>
    <scope>INDUCTION BY TNFSF11</scope>
</reference>
<reference key="11">
    <citation type="journal article" date="2013" name="J. Biol. Chem.">
        <title>The paired-box homeodomain transcription factor Pax6 binds to the upstream region of the TRAP gene promoter and suppresses receptor activator of NF-kappaB ligand (RANKL)-induced osteoclast differentiation.</title>
        <authorList>
            <person name="Kogawa M."/>
            <person name="Hisatake K."/>
            <person name="Atkins G.J."/>
            <person name="Findlay D.M."/>
            <person name="Enoki Y."/>
            <person name="Sato T."/>
            <person name="Gray P.C."/>
            <person name="Kanesaki-Yatsuka Y."/>
            <person name="Anderson P.H."/>
            <person name="Wada S."/>
            <person name="Kato N."/>
            <person name="Fukuda A."/>
            <person name="Katayama S."/>
            <person name="Tsujimoto M."/>
            <person name="Yoda T."/>
            <person name="Suda T."/>
            <person name="Okazaki Y."/>
            <person name="Matsumoto M."/>
        </authorList>
    </citation>
    <scope>FUNCTION</scope>
    <scope>INTERACTION WITH TLE6</scope>
    <scope>SUBCELLULAR LOCATION</scope>
    <scope>TISSUE SPECIFICITY</scope>
    <scope>INDUCTION BY TNFSF11-INDUCED OSTEOCLASTOGENESIS</scope>
</reference>
<reference key="12">
    <citation type="journal article" date="2013" name="J. Cell Sci.">
        <title>Fibrillin-1 directly regulates osteoclast formation and function by a dual mechanism.</title>
        <authorList>
            <person name="Tiedemann K."/>
            <person name="Boraschi-Diaz I."/>
            <person name="Rajakumar I."/>
            <person name="Kaur J."/>
            <person name="Roughley P."/>
            <person name="Reinhardt D.P."/>
            <person name="Komarova S.V."/>
        </authorList>
    </citation>
    <scope>SUBCELLULAR LOCATION</scope>
</reference>
<reference key="13">
    <citation type="journal article" date="2014" name="J. Innate Immun.">
        <title>The transcription factor nuclear factor of activated T cells c3 modulates the function of macrophages in sepsis.</title>
        <authorList>
            <person name="Ranjan R."/>
            <person name="Deng J."/>
            <person name="Chung S."/>
            <person name="Lee Y.G."/>
            <person name="Park G.Y."/>
            <person name="Xiao L."/>
            <person name="Joo M."/>
            <person name="Christman J.W."/>
            <person name="Karpurapu M."/>
        </authorList>
    </citation>
    <scope>SUBCELLULAR LOCATION</scope>
</reference>
<reference key="14">
    <citation type="journal article" date="2015" name="Proc. Natl. Acad. Sci. U.S.A.">
        <title>Tmem178 acts in a novel negative feedback loop targeting NFATc1 to regulate bone mass.</title>
        <authorList>
            <person name="Decker C.E."/>
            <person name="Yang Z."/>
            <person name="Rimer R."/>
            <person name="Park-Min K.H."/>
            <person name="Macaubas C."/>
            <person name="Mellins E.D."/>
            <person name="Novack D.V."/>
            <person name="Faccio R."/>
        </authorList>
    </citation>
    <scope>FUNCTION</scope>
    <scope>SUBCELLULAR LOCATION</scope>
    <scope>INDUCTION</scope>
</reference>
<reference key="15">
    <citation type="journal article" date="2017" name="J. Biol. Chem.">
        <title>Phospholipase C-related, but catalytically inactive protein (PRIP) upregulates osteoclast differentiation via calcium-calcineurin-NFATc1 signaling.</title>
        <authorList>
            <person name="Murakami A."/>
            <person name="Matsuda M."/>
            <person name="Harada Y."/>
            <person name="Hirata M."/>
        </authorList>
    </citation>
    <scope>SUBCELLULAR LOCATION</scope>
</reference>
<reference key="16">
    <citation type="journal article" date="2020" name="FASEB J.">
        <title>Early estrogen-induced gene 1 facilitates osteoclast formation through the inhibition of interferon regulatory factor 8 expression.</title>
        <authorList>
            <person name="Jeong E."/>
            <person name="Kim J."/>
            <person name="Go M."/>
            <person name="Lee S.Y."/>
        </authorList>
    </citation>
    <scope>SUBCELLULAR LOCATION</scope>
</reference>
<protein>
    <recommendedName>
        <fullName>Nuclear factor of activated T-cells, cytoplasmic 1</fullName>
        <shortName>NF-ATc1</shortName>
        <shortName>NFATc1</shortName>
    </recommendedName>
    <alternativeName>
        <fullName>NFAT transcription complex cytosolic component</fullName>
        <shortName>NF-ATc</shortName>
        <shortName evidence="21">NFATc</shortName>
    </alternativeName>
</protein>
<organism>
    <name type="scientific">Mus musculus</name>
    <name type="common">Mouse</name>
    <dbReference type="NCBI Taxonomy" id="10090"/>
    <lineage>
        <taxon>Eukaryota</taxon>
        <taxon>Metazoa</taxon>
        <taxon>Chordata</taxon>
        <taxon>Craniata</taxon>
        <taxon>Vertebrata</taxon>
        <taxon>Euteleostomi</taxon>
        <taxon>Mammalia</taxon>
        <taxon>Eutheria</taxon>
        <taxon>Euarchontoglires</taxon>
        <taxon>Glires</taxon>
        <taxon>Rodentia</taxon>
        <taxon>Myomorpha</taxon>
        <taxon>Muroidea</taxon>
        <taxon>Muridae</taxon>
        <taxon>Murinae</taxon>
        <taxon>Mus</taxon>
        <taxon>Mus</taxon>
    </lineage>
</organism>
<keyword id="KW-0010">Activator</keyword>
<keyword id="KW-0024">Alternative initiation</keyword>
<keyword id="KW-0025">Alternative splicing</keyword>
<keyword id="KW-0963">Cytoplasm</keyword>
<keyword id="KW-0238">DNA-binding</keyword>
<keyword id="KW-0539">Nucleus</keyword>
<keyword id="KW-0597">Phosphoprotein</keyword>
<keyword id="KW-1185">Reference proteome</keyword>
<keyword id="KW-0677">Repeat</keyword>
<keyword id="KW-0804">Transcription</keyword>
<keyword id="KW-0805">Transcription regulation</keyword>
<gene>
    <name type="primary">Nfatc1</name>
    <name type="synonym">Nfat2</name>
    <name type="synonym">Nfatc</name>
</gene>
<proteinExistence type="evidence at protein level"/>
<evidence type="ECO:0000250" key="1"/>
<evidence type="ECO:0000250" key="2">
    <source>
        <dbReference type="UniProtKB" id="O95644"/>
    </source>
</evidence>
<evidence type="ECO:0000255" key="3">
    <source>
        <dbReference type="PROSITE-ProRule" id="PRU00265"/>
    </source>
</evidence>
<evidence type="ECO:0000256" key="4">
    <source>
        <dbReference type="SAM" id="MobiDB-lite"/>
    </source>
</evidence>
<evidence type="ECO:0000269" key="5">
    <source>
    </source>
</evidence>
<evidence type="ECO:0000269" key="6">
    <source>
    </source>
</evidence>
<evidence type="ECO:0000269" key="7">
    <source>
    </source>
</evidence>
<evidence type="ECO:0000269" key="8">
    <source>
    </source>
</evidence>
<evidence type="ECO:0000269" key="9">
    <source>
    </source>
</evidence>
<evidence type="ECO:0000269" key="10">
    <source>
    </source>
</evidence>
<evidence type="ECO:0000269" key="11">
    <source>
    </source>
</evidence>
<evidence type="ECO:0000269" key="12">
    <source>
    </source>
</evidence>
<evidence type="ECO:0000269" key="13">
    <source>
    </source>
</evidence>
<evidence type="ECO:0000269" key="14">
    <source>
    </source>
</evidence>
<evidence type="ECO:0000269" key="15">
    <source>
    </source>
</evidence>
<evidence type="ECO:0000269" key="16">
    <source>
    </source>
</evidence>
<evidence type="ECO:0000269" key="17">
    <source>
    </source>
</evidence>
<evidence type="ECO:0000269" key="18">
    <source>
    </source>
</evidence>
<evidence type="ECO:0000269" key="19">
    <source>
    </source>
</evidence>
<evidence type="ECO:0000303" key="20">
    <source>
    </source>
</evidence>
<evidence type="ECO:0000303" key="21">
    <source>
    </source>
</evidence>
<evidence type="ECO:0000305" key="22"/>
<evidence type="ECO:0007744" key="23">
    <source>
    </source>
</evidence>
<accession>O88942</accession>
<accession>O70345</accession>